<evidence type="ECO:0000255" key="1">
    <source>
        <dbReference type="HAMAP-Rule" id="MF_01587"/>
    </source>
</evidence>
<proteinExistence type="inferred from homology"/>
<accession>Q4K4I6</accession>
<organism>
    <name type="scientific">Pseudomonas fluorescens (strain ATCC BAA-477 / NRRL B-23932 / Pf-5)</name>
    <dbReference type="NCBI Taxonomy" id="220664"/>
    <lineage>
        <taxon>Bacteria</taxon>
        <taxon>Pseudomonadati</taxon>
        <taxon>Pseudomonadota</taxon>
        <taxon>Gammaproteobacteria</taxon>
        <taxon>Pseudomonadales</taxon>
        <taxon>Pseudomonadaceae</taxon>
        <taxon>Pseudomonas</taxon>
    </lineage>
</organism>
<feature type="chain" id="PRO_0000313545" description="DNA ligase B">
    <location>
        <begin position="1"/>
        <end position="556"/>
    </location>
</feature>
<feature type="active site" description="N6-AMP-lysine intermediate" evidence="1">
    <location>
        <position position="124"/>
    </location>
</feature>
<sequence>MLPRAVVLLSLTPFFAQAACPDWPVPRATDEITALQQQLQRWDSSYYRDGRSLVADELYDQARQRLLTWRQCFPQAPRAMDQPLLGAGGSIRHPIPHTGVEKLADANAVTGWLKGRDDIWAQPKVDGVAVTLIYHRGQFQQALSRGDGVHGHDWTRAAWQIEAIPKRLPRPVDLLLQGELYLRLEQHVQARSGSLKARNRVAGWMARKQLTAAEAAQIGLFVWDWPQGPATLSERLEQLADLGFAEPREYSRPVGGFADAQQWRARWYRSPLPFASDGIILRQSRRPAAERWQAKAPYWIAAWKYPYAQVLASVRQVDFRIGRTGRITPLLEIEPVTLDDRQIRRVSLGSLQRWRSLDIVPGDQVAISLAGLSIPRLDEVVLRSTLRQSIQPPREADFHFLSCWQPSPGCEEQFLARLTWLSSKQGLNLQNIGSRTWARLVETGRIKGLLDWLTLDQAELANIAGFGDRSSKRLLESLHSARQQPFPRWLKALGIPPSGSADLSGPWQALAMKNSLDWQNEAGIGAERAAQLVAFFRAPEVLALQGALNSAGIEGF</sequence>
<protein>
    <recommendedName>
        <fullName evidence="1">DNA ligase B</fullName>
        <ecNumber evidence="1">6.5.1.2</ecNumber>
    </recommendedName>
    <alternativeName>
        <fullName evidence="1">Polydeoxyribonucleotide synthase [NAD(+)] B</fullName>
    </alternativeName>
</protein>
<reference key="1">
    <citation type="journal article" date="2005" name="Nat. Biotechnol.">
        <title>Complete genome sequence of the plant commensal Pseudomonas fluorescens Pf-5.</title>
        <authorList>
            <person name="Paulsen I.T."/>
            <person name="Press C.M."/>
            <person name="Ravel J."/>
            <person name="Kobayashi D.Y."/>
            <person name="Myers G.S.A."/>
            <person name="Mavrodi D.V."/>
            <person name="DeBoy R.T."/>
            <person name="Seshadri R."/>
            <person name="Ren Q."/>
            <person name="Madupu R."/>
            <person name="Dodson R.J."/>
            <person name="Durkin A.S."/>
            <person name="Brinkac L.M."/>
            <person name="Daugherty S.C."/>
            <person name="Sullivan S.A."/>
            <person name="Rosovitz M.J."/>
            <person name="Gwinn M.L."/>
            <person name="Zhou L."/>
            <person name="Schneider D.J."/>
            <person name="Cartinhour S.W."/>
            <person name="Nelson W.C."/>
            <person name="Weidman J."/>
            <person name="Watkins K."/>
            <person name="Tran K."/>
            <person name="Khouri H."/>
            <person name="Pierson E.A."/>
            <person name="Pierson L.S. III"/>
            <person name="Thomashow L.S."/>
            <person name="Loper J.E."/>
        </authorList>
    </citation>
    <scope>NUCLEOTIDE SEQUENCE [LARGE SCALE GENOMIC DNA]</scope>
    <source>
        <strain>ATCC BAA-477 / NRRL B-23932 / Pf-5</strain>
    </source>
</reference>
<gene>
    <name evidence="1" type="primary">ligB</name>
    <name type="ordered locus">PFL_5789</name>
</gene>
<keyword id="KW-0227">DNA damage</keyword>
<keyword id="KW-0234">DNA repair</keyword>
<keyword id="KW-0235">DNA replication</keyword>
<keyword id="KW-0436">Ligase</keyword>
<keyword id="KW-0520">NAD</keyword>
<name>LIGB_PSEF5</name>
<comment type="function">
    <text evidence="1">Catalyzes the formation of phosphodiester linkages between 5'-phosphoryl and 3'-hydroxyl groups in double-stranded DNA using NAD as a coenzyme and as the energy source for the reaction.</text>
</comment>
<comment type="catalytic activity">
    <reaction evidence="1">
        <text>NAD(+) + (deoxyribonucleotide)n-3'-hydroxyl + 5'-phospho-(deoxyribonucleotide)m = (deoxyribonucleotide)n+m + AMP + beta-nicotinamide D-nucleotide.</text>
        <dbReference type="EC" id="6.5.1.2"/>
    </reaction>
</comment>
<comment type="similarity">
    <text evidence="1">Belongs to the NAD-dependent DNA ligase family. LigB subfamily.</text>
</comment>
<dbReference type="EC" id="6.5.1.2" evidence="1"/>
<dbReference type="EMBL" id="CP000076">
    <property type="protein sequence ID" value="AAY94979.1"/>
    <property type="molecule type" value="Genomic_DNA"/>
</dbReference>
<dbReference type="RefSeq" id="WP_011063963.1">
    <property type="nucleotide sequence ID" value="NC_004129.6"/>
</dbReference>
<dbReference type="SMR" id="Q4K4I6"/>
<dbReference type="STRING" id="220664.PFL_5789"/>
<dbReference type="KEGG" id="pfl:PFL_5789"/>
<dbReference type="PATRIC" id="fig|220664.5.peg.5902"/>
<dbReference type="eggNOG" id="COG0272">
    <property type="taxonomic scope" value="Bacteria"/>
</dbReference>
<dbReference type="HOGENOM" id="CLU_489786_0_0_6"/>
<dbReference type="Proteomes" id="UP000008540">
    <property type="component" value="Chromosome"/>
</dbReference>
<dbReference type="GO" id="GO:0003911">
    <property type="term" value="F:DNA ligase (NAD+) activity"/>
    <property type="evidence" value="ECO:0007669"/>
    <property type="project" value="UniProtKB-UniRule"/>
</dbReference>
<dbReference type="GO" id="GO:0006281">
    <property type="term" value="P:DNA repair"/>
    <property type="evidence" value="ECO:0007669"/>
    <property type="project" value="UniProtKB-KW"/>
</dbReference>
<dbReference type="GO" id="GO:0006260">
    <property type="term" value="P:DNA replication"/>
    <property type="evidence" value="ECO:0007669"/>
    <property type="project" value="UniProtKB-KW"/>
</dbReference>
<dbReference type="Gene3D" id="1.10.150.20">
    <property type="entry name" value="5' to 3' exonuclease, C-terminal subdomain"/>
    <property type="match status" value="1"/>
</dbReference>
<dbReference type="Gene3D" id="3.30.470.30">
    <property type="entry name" value="DNA ligase/mRNA capping enzyme"/>
    <property type="match status" value="1"/>
</dbReference>
<dbReference type="Gene3D" id="1.10.287.610">
    <property type="entry name" value="Helix hairpin bin"/>
    <property type="match status" value="1"/>
</dbReference>
<dbReference type="Gene3D" id="2.40.50.140">
    <property type="entry name" value="Nucleic acid-binding proteins"/>
    <property type="match status" value="1"/>
</dbReference>
<dbReference type="HAMAP" id="MF_01587">
    <property type="entry name" value="DNA_ligase_B"/>
    <property type="match status" value="1"/>
</dbReference>
<dbReference type="InterPro" id="IPR001679">
    <property type="entry name" value="DNA_ligase"/>
</dbReference>
<dbReference type="InterPro" id="IPR020923">
    <property type="entry name" value="DNA_ligase_B"/>
</dbReference>
<dbReference type="InterPro" id="IPR013839">
    <property type="entry name" value="DNAligase_adenylation"/>
</dbReference>
<dbReference type="InterPro" id="IPR013840">
    <property type="entry name" value="DNAligase_N"/>
</dbReference>
<dbReference type="InterPro" id="IPR012340">
    <property type="entry name" value="NA-bd_OB-fold"/>
</dbReference>
<dbReference type="InterPro" id="IPR050326">
    <property type="entry name" value="NAD_dep_DNA_ligaseB"/>
</dbReference>
<dbReference type="InterPro" id="IPR004150">
    <property type="entry name" value="NAD_DNA_ligase_OB"/>
</dbReference>
<dbReference type="InterPro" id="IPR010994">
    <property type="entry name" value="RuvA_2-like"/>
</dbReference>
<dbReference type="NCBIfam" id="NF005987">
    <property type="entry name" value="PRK08097.1"/>
    <property type="match status" value="1"/>
</dbReference>
<dbReference type="PANTHER" id="PTHR47810">
    <property type="entry name" value="DNA LIGASE"/>
    <property type="match status" value="1"/>
</dbReference>
<dbReference type="PANTHER" id="PTHR47810:SF1">
    <property type="entry name" value="DNA LIGASE B"/>
    <property type="match status" value="1"/>
</dbReference>
<dbReference type="Pfam" id="PF01653">
    <property type="entry name" value="DNA_ligase_aden"/>
    <property type="match status" value="1"/>
</dbReference>
<dbReference type="Pfam" id="PF03120">
    <property type="entry name" value="DNA_ligase_OB"/>
    <property type="match status" value="1"/>
</dbReference>
<dbReference type="PIRSF" id="PIRSF001604">
    <property type="entry name" value="LigA"/>
    <property type="match status" value="1"/>
</dbReference>
<dbReference type="SMART" id="SM00532">
    <property type="entry name" value="LIGANc"/>
    <property type="match status" value="1"/>
</dbReference>
<dbReference type="SUPFAM" id="SSF56091">
    <property type="entry name" value="DNA ligase/mRNA capping enzyme, catalytic domain"/>
    <property type="match status" value="1"/>
</dbReference>
<dbReference type="SUPFAM" id="SSF50249">
    <property type="entry name" value="Nucleic acid-binding proteins"/>
    <property type="match status" value="1"/>
</dbReference>
<dbReference type="SUPFAM" id="SSF47781">
    <property type="entry name" value="RuvA domain 2-like"/>
    <property type="match status" value="1"/>
</dbReference>